<dbReference type="EMBL" id="X72630">
    <property type="protein sequence ID" value="CAA51206.1"/>
    <property type="molecule type" value="Genomic_DNA"/>
</dbReference>
<dbReference type="EMBL" id="CH480820">
    <property type="protein sequence ID" value="EDW54422.1"/>
    <property type="molecule type" value="Genomic_DNA"/>
</dbReference>
<dbReference type="EMBL" id="AY505178">
    <property type="protein sequence ID" value="AAS99356.1"/>
    <property type="molecule type" value="Genomic_DNA"/>
</dbReference>
<dbReference type="EMBL" id="AY505179">
    <property type="protein sequence ID" value="AAS99357.1"/>
    <property type="molecule type" value="Genomic_DNA"/>
</dbReference>
<dbReference type="EMBL" id="AY505180">
    <property type="protein sequence ID" value="AAS99358.1"/>
    <property type="molecule type" value="Genomic_DNA"/>
</dbReference>
<dbReference type="EMBL" id="AY505181">
    <property type="protein sequence ID" value="AAS99359.1"/>
    <property type="molecule type" value="Genomic_DNA"/>
</dbReference>
<dbReference type="EMBL" id="AY505182">
    <property type="protein sequence ID" value="AAS99360.1"/>
    <property type="molecule type" value="Genomic_DNA"/>
</dbReference>
<dbReference type="EMBL" id="AY505183">
    <property type="protein sequence ID" value="AAS99361.1"/>
    <property type="molecule type" value="Genomic_DNA"/>
</dbReference>
<dbReference type="EMBL" id="AY505184">
    <property type="protein sequence ID" value="AAS99362.1"/>
    <property type="molecule type" value="Genomic_DNA"/>
</dbReference>
<dbReference type="EMBL" id="AY505185">
    <property type="protein sequence ID" value="AAS99363.1"/>
    <property type="molecule type" value="Genomic_DNA"/>
</dbReference>
<dbReference type="EMBL" id="AY505186">
    <property type="protein sequence ID" value="AAS99364.1"/>
    <property type="molecule type" value="Genomic_DNA"/>
</dbReference>
<dbReference type="EMBL" id="AY505187">
    <property type="protein sequence ID" value="AAS99365.1"/>
    <property type="molecule type" value="Genomic_DNA"/>
</dbReference>
<dbReference type="STRING" id="7238.P33736"/>
<dbReference type="GlyCosmos" id="P33736">
    <property type="glycosylation" value="3 sites, No reported glycans"/>
</dbReference>
<dbReference type="EnsemblMetazoa" id="FBtr0200975">
    <property type="protein sequence ID" value="FBpp0199467"/>
    <property type="gene ID" value="FBgn0260790"/>
</dbReference>
<dbReference type="EnsemblMetazoa" id="XM_002037968.2">
    <property type="protein sequence ID" value="XP_002038004.1"/>
    <property type="gene ID" value="LOC6613536"/>
</dbReference>
<dbReference type="GeneID" id="6613536"/>
<dbReference type="KEGG" id="dse:6613536"/>
<dbReference type="CTD" id="33817"/>
<dbReference type="HOGENOM" id="CLU_1162203_0_0_1"/>
<dbReference type="OMA" id="AQKINYE"/>
<dbReference type="PhylomeDB" id="P33736"/>
<dbReference type="Proteomes" id="UP000001292">
    <property type="component" value="Unassembled WGS sequence"/>
</dbReference>
<dbReference type="GO" id="GO:0005576">
    <property type="term" value="C:extracellular region"/>
    <property type="evidence" value="ECO:0007669"/>
    <property type="project" value="UniProtKB-SubCell"/>
</dbReference>
<dbReference type="GO" id="GO:0042802">
    <property type="term" value="F:identical protein binding"/>
    <property type="evidence" value="ECO:0007669"/>
    <property type="project" value="EnsemblMetazoa"/>
</dbReference>
<dbReference type="GO" id="GO:0007618">
    <property type="term" value="P:mating"/>
    <property type="evidence" value="ECO:0007669"/>
    <property type="project" value="InterPro"/>
</dbReference>
<dbReference type="GO" id="GO:2000130">
    <property type="term" value="P:positive regulation of octopamine signaling pathway"/>
    <property type="evidence" value="ECO:0007669"/>
    <property type="project" value="EnsemblMetazoa"/>
</dbReference>
<dbReference type="GO" id="GO:0060279">
    <property type="term" value="P:positive regulation of ovulation"/>
    <property type="evidence" value="ECO:0007669"/>
    <property type="project" value="EnsemblMetazoa"/>
</dbReference>
<dbReference type="InterPro" id="IPR004315">
    <property type="entry name" value="Male_ac_gland_sc"/>
</dbReference>
<dbReference type="Pfam" id="PF03082">
    <property type="entry name" value="MAGSP"/>
    <property type="match status" value="1"/>
</dbReference>
<sequence length="255" mass="28345">MNLILLCSQILLLLFTVANCDGEHQLDSSMDLKSDSTKSAVLKNVAPKNDATQAEIAKDDVALKSGKKGDYVMEIDVSDIPLDDYPINNSKSRKNSSTLPSQILTDKPNQGSNQIALKALKHRLLMEQNNNLFLRNHSVSLMNEIEARKTDIIQARQLNIDLELELEALKRELSEMNAQNARKSTKSCKKRPSKDIASPVNQLQEVIVKNTYRNKYLTLLTQLAQKINYEIANVNNPATDVPTGKSPSEGNPSTT</sequence>
<evidence type="ECO:0000255" key="1"/>
<evidence type="ECO:0000256" key="2">
    <source>
        <dbReference type="SAM" id="MobiDB-lite"/>
    </source>
</evidence>
<evidence type="ECO:0000269" key="3">
    <source>
    </source>
</evidence>
<proteinExistence type="evidence at transcript level"/>
<reference key="1">
    <citation type="journal article" date="1992" name="Genetics">
        <title>Polymorphism and divergence in the Mst26A male accessory gland gene region in Drosophila.</title>
        <authorList>
            <person name="Aguade M."/>
            <person name="Miyashita N."/>
            <person name="Langley C.H."/>
        </authorList>
    </citation>
    <scope>NUCLEOTIDE SEQUENCE [GENOMIC DNA]</scope>
</reference>
<reference key="2">
    <citation type="journal article" date="2007" name="Nature">
        <title>Evolution of genes and genomes on the Drosophila phylogeny.</title>
        <authorList>
            <consortium name="Drosophila 12 genomes consortium"/>
        </authorList>
    </citation>
    <scope>NUCLEOTIDE SEQUENCE [LARGE SCALE GENOMIC DNA]</scope>
    <source>
        <strain>Rob3c / Tucson 14021-0248.25</strain>
    </source>
</reference>
<reference key="3">
    <citation type="journal article" date="2004" name="Genetics">
        <title>Molecular population genetics of male accessory gland proteins in the Drosophila simulans complex.</title>
        <authorList>
            <person name="Kern A.D."/>
            <person name="Jones C.D."/>
            <person name="Begun D.J."/>
        </authorList>
    </citation>
    <scope>NUCLEOTIDE SEQUENCE [GENOMIC DNA] OF 13-255</scope>
    <scope>VARIANTS LEU-25; ARG-33; PHE-36; MET-37; ASN-38; ILE-39; PHE-117; VAL-207 AND TRP-244</scope>
    <source>
        <strain>01</strain>
        <strain>11</strain>
        <strain>33</strain>
        <strain>34</strain>
        <strain>35</strain>
        <strain>7</strain>
        <strain>77 25</strain>
        <strain>81</strain>
        <strain>Praslin</strain>
        <strain>Robertson</strain>
    </source>
</reference>
<organism>
    <name type="scientific">Drosophila sechellia</name>
    <name type="common">Fruit fly</name>
    <dbReference type="NCBI Taxonomy" id="7238"/>
    <lineage>
        <taxon>Eukaryota</taxon>
        <taxon>Metazoa</taxon>
        <taxon>Ecdysozoa</taxon>
        <taxon>Arthropoda</taxon>
        <taxon>Hexapoda</taxon>
        <taxon>Insecta</taxon>
        <taxon>Pterygota</taxon>
        <taxon>Neoptera</taxon>
        <taxon>Endopterygota</taxon>
        <taxon>Diptera</taxon>
        <taxon>Brachycera</taxon>
        <taxon>Muscomorpha</taxon>
        <taxon>Ephydroidea</taxon>
        <taxon>Drosophilidae</taxon>
        <taxon>Drosophila</taxon>
        <taxon>Sophophora</taxon>
    </lineage>
</organism>
<gene>
    <name type="primary">Acp26Aa</name>
    <name type="synonym">Mst26Aa</name>
    <name type="synonym">mst355a</name>
    <name type="ORF">GM17990</name>
</gene>
<feature type="signal peptide" evidence="1">
    <location>
        <begin position="1"/>
        <end position="18"/>
    </location>
</feature>
<feature type="chain" id="PRO_0000021756" description="Accessory gland-specific peptide 26Aa">
    <location>
        <begin position="19"/>
        <end position="255"/>
    </location>
</feature>
<feature type="region of interest" description="Disordered" evidence="2">
    <location>
        <begin position="86"/>
        <end position="110"/>
    </location>
</feature>
<feature type="region of interest" description="Disordered" evidence="2">
    <location>
        <begin position="177"/>
        <end position="196"/>
    </location>
</feature>
<feature type="region of interest" description="Disordered" evidence="2">
    <location>
        <begin position="235"/>
        <end position="255"/>
    </location>
</feature>
<feature type="compositionally biased region" description="Polar residues" evidence="2">
    <location>
        <begin position="87"/>
        <end position="110"/>
    </location>
</feature>
<feature type="compositionally biased region" description="Basic residues" evidence="2">
    <location>
        <begin position="183"/>
        <end position="192"/>
    </location>
</feature>
<feature type="compositionally biased region" description="Polar residues" evidence="2">
    <location>
        <begin position="245"/>
        <end position="255"/>
    </location>
</feature>
<feature type="glycosylation site" description="N-linked (GlcNAc...) asparagine" evidence="1">
    <location>
        <position position="88"/>
    </location>
</feature>
<feature type="glycosylation site" description="N-linked (GlcNAc...) asparagine" evidence="1">
    <location>
        <position position="95"/>
    </location>
</feature>
<feature type="glycosylation site" description="N-linked (GlcNAc...) asparagine" evidence="1">
    <location>
        <position position="136"/>
    </location>
</feature>
<feature type="sequence variant" description="In strain: 35." evidence="3">
    <original>Q</original>
    <variation>L</variation>
    <location>
        <position position="25"/>
    </location>
</feature>
<feature type="sequence variant" description="In strain: 7." evidence="3">
    <original>K</original>
    <variation>R</variation>
    <location>
        <position position="33"/>
    </location>
</feature>
<feature type="sequence variant" description="In strain: 77 25 and Praslin." evidence="3">
    <original>S</original>
    <variation>F</variation>
    <location>
        <position position="36"/>
    </location>
</feature>
<feature type="sequence variant" description="In strain: 7." evidence="3">
    <original>T</original>
    <variation>M</variation>
    <location>
        <position position="37"/>
    </location>
</feature>
<feature type="sequence variant" description="In strain: 7." evidence="3">
    <original>K</original>
    <variation>N</variation>
    <location>
        <position position="38"/>
    </location>
</feature>
<feature type="sequence variant" description="In strain: 7." evidence="3">
    <original>S</original>
    <variation>I</variation>
    <location>
        <position position="39"/>
    </location>
</feature>
<feature type="sequence variant" description="In strain: 7." evidence="3">
    <original>L</original>
    <variation>F</variation>
    <location>
        <position position="117"/>
    </location>
</feature>
<feature type="sequence variant" description="In strain: 7." evidence="3">
    <original>I</original>
    <variation>V</variation>
    <location>
        <position position="207"/>
    </location>
</feature>
<feature type="sequence variant" description="In strain: 11." evidence="3">
    <original>G</original>
    <variation>W</variation>
    <location>
        <position position="244"/>
    </location>
</feature>
<accession>P33736</accession>
<accession>B4I1L5</accession>
<accession>Q6RCC1</accession>
<accession>Q6RCC2</accession>
<accession>Q6RCC3</accession>
<accession>Q6RCC4</accession>
<accession>Q6RCC6</accession>
<name>MS2A_DROSE</name>
<keyword id="KW-0085">Behavior</keyword>
<keyword id="KW-0325">Glycoprotein</keyword>
<keyword id="KW-1185">Reference proteome</keyword>
<keyword id="KW-0964">Secreted</keyword>
<keyword id="KW-0732">Signal</keyword>
<protein>
    <recommendedName>
        <fullName>Accessory gland-specific peptide 26Aa</fullName>
    </recommendedName>
    <alternativeName>
        <fullName>Male accessory gland secretory protein 355A</fullName>
    </alternativeName>
</protein>
<comment type="function">
    <text>This protein is transferred from male to female's hemolymph during mating, affecting egglaying and behavior after mating.</text>
</comment>
<comment type="subcellular location">
    <subcellularLocation>
        <location>Secreted</location>
        <location>Extracellular space</location>
    </subcellularLocation>
</comment>
<comment type="tissue specificity">
    <text>Main cells of the accessory glands of males.</text>
</comment>
<comment type="PTM">
    <text>It undergoes several cleavages as it is secreted and it is further processed in the recipient female.</text>
</comment>